<comment type="function">
    <text>May play an important role in fibrillogenesis by controlling lateral growth of collagen II fibrils.</text>
</comment>
<comment type="subunit">
    <text evidence="1">Trimers composed of three different chains: alpha 1(XI), alpha 2(XI), and alpha 3(XI). Alpha 3(XI) is a post-translational modification of alpha 1(II). Alpha 1(V) can also be found instead of alpha 3(XI)=1(II) (By similarity).</text>
</comment>
<comment type="subcellular location">
    <subcellularLocation>
        <location evidence="4">Secreted</location>
        <location evidence="4">Extracellular space</location>
        <location evidence="4">Extracellular matrix</location>
    </subcellularLocation>
</comment>
<comment type="alternative products">
    <event type="alternative splicing"/>
    <isoform>
        <id>Q61245-1</id>
        <name>Long</name>
        <sequence type="displayed"/>
    </isoform>
    <isoform>
        <id>Q61245-2</id>
        <name>Short</name>
        <sequence type="described" ref="VSP_001147"/>
    </isoform>
</comment>
<comment type="domain">
    <text evidence="1">The C-terminal propeptide, also known as COLFI domain, have crucial roles in tissue growth and repair by controlling both the intracellular assembly of procollagen molecules and the extracellular assembly of collagen fibrils. It binds a calcium ion which is essential for its function (By similarity).</text>
</comment>
<comment type="PTM">
    <text>Prolines at the third position of the tripeptide repeating unit (G-X-Y) are hydroxylated in some or all of the chains.</text>
</comment>
<comment type="PTM">
    <text evidence="1">N-glycosylated.</text>
</comment>
<comment type="disease">
    <text evidence="6">Defects in Col11a1 are associated with chondrodysplasia, an autosomal recessive disease characterized by skeletal defects caused by abnormalities in the cartilage of limbs, ribs, mandibles and trachea.</text>
</comment>
<comment type="similarity">
    <text evidence="4">Belongs to the fibrillar collagen family.</text>
</comment>
<dbReference type="EMBL" id="D38162">
    <property type="protein sequence ID" value="BAA07367.1"/>
    <property type="molecule type" value="mRNA"/>
</dbReference>
<dbReference type="EMBL" id="BC052161">
    <property type="protein sequence ID" value="AAH52161.1"/>
    <property type="molecule type" value="mRNA"/>
</dbReference>
<dbReference type="EMBL" id="S74574">
    <property type="protein sequence ID" value="AAB33439.1"/>
    <property type="molecule type" value="mRNA"/>
</dbReference>
<dbReference type="CCDS" id="CCDS17778.1">
    <molecule id="Q61245-1"/>
</dbReference>
<dbReference type="PIR" id="A55648">
    <property type="entry name" value="A55648"/>
</dbReference>
<dbReference type="RefSeq" id="NP_031755.2">
    <molecule id="Q61245-1"/>
    <property type="nucleotide sequence ID" value="NM_007729.3"/>
</dbReference>
<dbReference type="SMR" id="Q61245"/>
<dbReference type="BioGRID" id="198805">
    <property type="interactions" value="6"/>
</dbReference>
<dbReference type="ComplexPortal" id="CPX-2975">
    <property type="entry name" value="Collagen type XI trimer variant 1"/>
</dbReference>
<dbReference type="ComplexPortal" id="CPX-2976">
    <property type="entry name" value="Collagen type XI trimer variant 2"/>
</dbReference>
<dbReference type="ComplexPortal" id="CPX-2977">
    <property type="entry name" value="Collagen type XI trimer variant 3"/>
</dbReference>
<dbReference type="FunCoup" id="Q61245">
    <property type="interactions" value="140"/>
</dbReference>
<dbReference type="IntAct" id="Q61245">
    <property type="interactions" value="1"/>
</dbReference>
<dbReference type="MINT" id="Q61245"/>
<dbReference type="STRING" id="10090.ENSMUSP00000089793"/>
<dbReference type="GlyCosmos" id="Q61245">
    <property type="glycosylation" value="1 site, No reported glycans"/>
</dbReference>
<dbReference type="GlyGen" id="Q61245">
    <property type="glycosylation" value="4 sites, 1 N-linked glycan (1 site)"/>
</dbReference>
<dbReference type="iPTMnet" id="Q61245"/>
<dbReference type="PhosphoSitePlus" id="Q61245"/>
<dbReference type="jPOST" id="Q61245"/>
<dbReference type="PaxDb" id="10090-ENSMUSP00000089793"/>
<dbReference type="PeptideAtlas" id="Q61245"/>
<dbReference type="ProteomicsDB" id="283551">
    <molecule id="Q61245-1"/>
</dbReference>
<dbReference type="ProteomicsDB" id="283552">
    <molecule id="Q61245-2"/>
</dbReference>
<dbReference type="Pumba" id="Q61245"/>
<dbReference type="Antibodypedia" id="33704">
    <property type="antibodies" value="153 antibodies from 30 providers"/>
</dbReference>
<dbReference type="DNASU" id="12814"/>
<dbReference type="Ensembl" id="ENSMUST00000092155.12">
    <molecule id="Q61245-1"/>
    <property type="protein sequence ID" value="ENSMUSP00000089793.6"/>
    <property type="gene ID" value="ENSMUSG00000027966.21"/>
</dbReference>
<dbReference type="GeneID" id="12814"/>
<dbReference type="KEGG" id="mmu:12814"/>
<dbReference type="UCSC" id="uc008rbk.1">
    <molecule id="Q61245-1"/>
    <property type="organism name" value="mouse"/>
</dbReference>
<dbReference type="AGR" id="MGI:88446"/>
<dbReference type="CTD" id="1301"/>
<dbReference type="MGI" id="MGI:88446">
    <property type="gene designation" value="Col11a1"/>
</dbReference>
<dbReference type="VEuPathDB" id="HostDB:ENSMUSG00000027966"/>
<dbReference type="eggNOG" id="KOG3544">
    <property type="taxonomic scope" value="Eukaryota"/>
</dbReference>
<dbReference type="GeneTree" id="ENSGT00940000154535"/>
<dbReference type="HOGENOM" id="CLU_001074_2_1_1"/>
<dbReference type="InParanoid" id="Q61245"/>
<dbReference type="OMA" id="KGNMQGP"/>
<dbReference type="OrthoDB" id="8939548at2759"/>
<dbReference type="PhylomeDB" id="Q61245"/>
<dbReference type="TreeFam" id="TF323987"/>
<dbReference type="Reactome" id="R-MMU-1442490">
    <property type="pathway name" value="Collagen degradation"/>
</dbReference>
<dbReference type="Reactome" id="R-MMU-1650814">
    <property type="pathway name" value="Collagen biosynthesis and modifying enzymes"/>
</dbReference>
<dbReference type="Reactome" id="R-MMU-2022090">
    <property type="pathway name" value="Assembly of collagen fibrils and other multimeric structures"/>
</dbReference>
<dbReference type="Reactome" id="R-MMU-3000171">
    <property type="pathway name" value="Non-integrin membrane-ECM interactions"/>
</dbReference>
<dbReference type="Reactome" id="R-MMU-8874081">
    <property type="pathway name" value="MET activates PTK2 signaling"/>
</dbReference>
<dbReference type="Reactome" id="R-MMU-8948216">
    <property type="pathway name" value="Collagen chain trimerization"/>
</dbReference>
<dbReference type="BioGRID-ORCS" id="12814">
    <property type="hits" value="2 hits in 80 CRISPR screens"/>
</dbReference>
<dbReference type="ChiTaRS" id="Col11a1">
    <property type="organism name" value="mouse"/>
</dbReference>
<dbReference type="PRO" id="PR:Q61245"/>
<dbReference type="Proteomes" id="UP000000589">
    <property type="component" value="Chromosome 3"/>
</dbReference>
<dbReference type="RNAct" id="Q61245">
    <property type="molecule type" value="protein"/>
</dbReference>
<dbReference type="Bgee" id="ENSMUSG00000027966">
    <property type="expression patterns" value="Expressed in diaphysis of femur and 204 other cell types or tissues"/>
</dbReference>
<dbReference type="ExpressionAtlas" id="Q61245">
    <property type="expression patterns" value="baseline and differential"/>
</dbReference>
<dbReference type="GO" id="GO:0005581">
    <property type="term" value="C:collagen trimer"/>
    <property type="evidence" value="ECO:0000314"/>
    <property type="project" value="MGI"/>
</dbReference>
<dbReference type="GO" id="GO:0005592">
    <property type="term" value="C:collagen type XI trimer"/>
    <property type="evidence" value="ECO:0000303"/>
    <property type="project" value="ComplexPortal"/>
</dbReference>
<dbReference type="GO" id="GO:0062023">
    <property type="term" value="C:collagen-containing extracellular matrix"/>
    <property type="evidence" value="ECO:0007005"/>
    <property type="project" value="BHF-UCL"/>
</dbReference>
<dbReference type="GO" id="GO:0031012">
    <property type="term" value="C:extracellular matrix"/>
    <property type="evidence" value="ECO:0000314"/>
    <property type="project" value="MGI"/>
</dbReference>
<dbReference type="GO" id="GO:0005615">
    <property type="term" value="C:extracellular space"/>
    <property type="evidence" value="ECO:0007005"/>
    <property type="project" value="BHF-UCL"/>
</dbReference>
<dbReference type="GO" id="GO:0005201">
    <property type="term" value="F:extracellular matrix structural constituent"/>
    <property type="evidence" value="ECO:0007669"/>
    <property type="project" value="InterPro"/>
</dbReference>
<dbReference type="GO" id="GO:0046872">
    <property type="term" value="F:metal ion binding"/>
    <property type="evidence" value="ECO:0007669"/>
    <property type="project" value="UniProtKB-KW"/>
</dbReference>
<dbReference type="GO" id="GO:0001502">
    <property type="term" value="P:cartilage condensation"/>
    <property type="evidence" value="ECO:0000315"/>
    <property type="project" value="MGI"/>
</dbReference>
<dbReference type="GO" id="GO:0051216">
    <property type="term" value="P:cartilage development"/>
    <property type="evidence" value="ECO:0000315"/>
    <property type="project" value="MGI"/>
</dbReference>
<dbReference type="GO" id="GO:0002063">
    <property type="term" value="P:chondrocyte development"/>
    <property type="evidence" value="ECO:0000315"/>
    <property type="project" value="MGI"/>
</dbReference>
<dbReference type="GO" id="GO:0030199">
    <property type="term" value="P:collagen fibril organization"/>
    <property type="evidence" value="ECO:0000315"/>
    <property type="project" value="MGI"/>
</dbReference>
<dbReference type="GO" id="GO:0050910">
    <property type="term" value="P:detection of mechanical stimulus involved in sensory perception of sound"/>
    <property type="evidence" value="ECO:0007669"/>
    <property type="project" value="Ensembl"/>
</dbReference>
<dbReference type="GO" id="GO:0048704">
    <property type="term" value="P:embryonic skeletal system morphogenesis"/>
    <property type="evidence" value="ECO:0000315"/>
    <property type="project" value="MGI"/>
</dbReference>
<dbReference type="GO" id="GO:0035987">
    <property type="term" value="P:endodermal cell differentiation"/>
    <property type="evidence" value="ECO:0007669"/>
    <property type="project" value="Ensembl"/>
</dbReference>
<dbReference type="GO" id="GO:0003007">
    <property type="term" value="P:heart morphogenesis"/>
    <property type="evidence" value="ECO:0000316"/>
    <property type="project" value="MGI"/>
</dbReference>
<dbReference type="GO" id="GO:0042472">
    <property type="term" value="P:inner ear morphogenesis"/>
    <property type="evidence" value="ECO:0000315"/>
    <property type="project" value="MGI"/>
</dbReference>
<dbReference type="GO" id="GO:0006029">
    <property type="term" value="P:proteoglycan metabolic process"/>
    <property type="evidence" value="ECO:0000315"/>
    <property type="project" value="MGI"/>
</dbReference>
<dbReference type="GO" id="GO:0048705">
    <property type="term" value="P:skeletal system morphogenesis"/>
    <property type="evidence" value="ECO:0000315"/>
    <property type="project" value="MGI"/>
</dbReference>
<dbReference type="GO" id="GO:0035989">
    <property type="term" value="P:tendon development"/>
    <property type="evidence" value="ECO:0000315"/>
    <property type="project" value="MGI"/>
</dbReference>
<dbReference type="GO" id="GO:0055010">
    <property type="term" value="P:ventricular cardiac muscle tissue morphogenesis"/>
    <property type="evidence" value="ECO:0000315"/>
    <property type="project" value="MGI"/>
</dbReference>
<dbReference type="GO" id="GO:0007601">
    <property type="term" value="P:visual perception"/>
    <property type="evidence" value="ECO:0007669"/>
    <property type="project" value="Ensembl"/>
</dbReference>
<dbReference type="CDD" id="cd00110">
    <property type="entry name" value="LamG"/>
    <property type="match status" value="1"/>
</dbReference>
<dbReference type="FunFam" id="2.60.120.1000:FF:000002">
    <property type="entry name" value="Collagen XI alpha 1 chain"/>
    <property type="match status" value="1"/>
</dbReference>
<dbReference type="FunFam" id="2.60.120.200:FF:000016">
    <property type="entry name" value="Collagen XI alpha 1 chain"/>
    <property type="match status" value="1"/>
</dbReference>
<dbReference type="Gene3D" id="2.60.120.1000">
    <property type="match status" value="1"/>
</dbReference>
<dbReference type="Gene3D" id="2.60.120.200">
    <property type="match status" value="1"/>
</dbReference>
<dbReference type="InterPro" id="IPR008160">
    <property type="entry name" value="Collagen"/>
</dbReference>
<dbReference type="InterPro" id="IPR050149">
    <property type="entry name" value="Collagen_superfamily"/>
</dbReference>
<dbReference type="InterPro" id="IPR013320">
    <property type="entry name" value="ConA-like_dom_sf"/>
</dbReference>
<dbReference type="InterPro" id="IPR000885">
    <property type="entry name" value="Fib_collagen_C"/>
</dbReference>
<dbReference type="InterPro" id="IPR001791">
    <property type="entry name" value="Laminin_G"/>
</dbReference>
<dbReference type="InterPro" id="IPR048287">
    <property type="entry name" value="TSPN-like_N"/>
</dbReference>
<dbReference type="PANTHER" id="PTHR24023">
    <property type="entry name" value="COLLAGEN ALPHA"/>
    <property type="match status" value="1"/>
</dbReference>
<dbReference type="PANTHER" id="PTHR24023:SF1082">
    <property type="entry name" value="COLLAGEN TRIPLE HELIX REPEAT"/>
    <property type="match status" value="1"/>
</dbReference>
<dbReference type="Pfam" id="PF01410">
    <property type="entry name" value="COLFI"/>
    <property type="match status" value="1"/>
</dbReference>
<dbReference type="Pfam" id="PF01391">
    <property type="entry name" value="Collagen"/>
    <property type="match status" value="7"/>
</dbReference>
<dbReference type="Pfam" id="PF02210">
    <property type="entry name" value="Laminin_G_2"/>
    <property type="match status" value="1"/>
</dbReference>
<dbReference type="SMART" id="SM00038">
    <property type="entry name" value="COLFI"/>
    <property type="match status" value="1"/>
</dbReference>
<dbReference type="SMART" id="SM00282">
    <property type="entry name" value="LamG"/>
    <property type="match status" value="1"/>
</dbReference>
<dbReference type="SMART" id="SM00210">
    <property type="entry name" value="TSPN"/>
    <property type="match status" value="1"/>
</dbReference>
<dbReference type="SUPFAM" id="SSF49899">
    <property type="entry name" value="Concanavalin A-like lectins/glucanases"/>
    <property type="match status" value="1"/>
</dbReference>
<dbReference type="PROSITE" id="PS51461">
    <property type="entry name" value="NC1_FIB"/>
    <property type="match status" value="1"/>
</dbReference>
<feature type="signal peptide" evidence="3">
    <location>
        <begin position="1"/>
        <end position="34"/>
    </location>
</feature>
<feature type="propeptide" id="PRO_0000005777" description="N-terminal propeptide" evidence="3">
    <location>
        <begin position="35"/>
        <end position="511"/>
    </location>
</feature>
<feature type="chain" id="PRO_0000005778" description="Collagen alpha-1(XI) chain">
    <location>
        <begin position="512"/>
        <end position="1561"/>
    </location>
</feature>
<feature type="propeptide" id="PRO_0000005779" description="C-terminal propeptide">
    <location>
        <begin position="1562"/>
        <end position="1804"/>
    </location>
</feature>
<feature type="domain" description="Laminin G-like">
    <location>
        <begin position="70"/>
        <end position="242"/>
    </location>
</feature>
<feature type="domain" description="Collagen-like 1">
    <location>
        <begin position="440"/>
        <end position="488"/>
    </location>
</feature>
<feature type="domain" description="Collagen-like 2">
    <location>
        <begin position="527"/>
        <end position="584"/>
    </location>
</feature>
<feature type="domain" description="Collagen-like 3">
    <location>
        <begin position="567"/>
        <end position="623"/>
    </location>
</feature>
<feature type="domain" description="Collagen-like 4">
    <location>
        <begin position="728"/>
        <end position="781"/>
    </location>
</feature>
<feature type="domain" description="Collagen-like 5">
    <location>
        <begin position="1427"/>
        <end position="1482"/>
    </location>
</feature>
<feature type="domain" description="Collagen-like 6">
    <location>
        <begin position="1481"/>
        <end position="1539"/>
    </location>
</feature>
<feature type="domain" description="Fibrillar collagen NC1" evidence="4">
    <location>
        <begin position="1575"/>
        <end position="1803"/>
    </location>
</feature>
<feature type="region of interest" description="Nonhelical region">
    <location>
        <begin position="229"/>
        <end position="417"/>
    </location>
</feature>
<feature type="region of interest" description="Disordered" evidence="5">
    <location>
        <begin position="315"/>
        <end position="334"/>
    </location>
</feature>
<feature type="region of interest" description="Triple-helical region (interrupted)">
    <location>
        <begin position="418"/>
        <end position="506"/>
    </location>
</feature>
<feature type="region of interest" description="Disordered" evidence="5">
    <location>
        <begin position="433"/>
        <end position="506"/>
    </location>
</feature>
<feature type="region of interest" description="Short nonhelical segment">
    <location>
        <begin position="507"/>
        <end position="509"/>
    </location>
</feature>
<feature type="region of interest" description="Telopeptide">
    <location>
        <begin position="510"/>
        <end position="527"/>
    </location>
</feature>
<feature type="region of interest" description="Disordered" evidence="5">
    <location>
        <begin position="526"/>
        <end position="1567"/>
    </location>
</feature>
<feature type="region of interest" description="Triple-helical region">
    <location>
        <begin position="528"/>
        <end position="1540"/>
    </location>
</feature>
<feature type="region of interest" description="Nonhelical region (C-terminal)">
    <location>
        <begin position="1541"/>
        <end position="1561"/>
    </location>
</feature>
<feature type="compositionally biased region" description="Polar residues" evidence="5">
    <location>
        <begin position="315"/>
        <end position="329"/>
    </location>
</feature>
<feature type="compositionally biased region" description="Low complexity" evidence="5">
    <location>
        <begin position="447"/>
        <end position="465"/>
    </location>
</feature>
<feature type="compositionally biased region" description="Low complexity" evidence="5">
    <location>
        <begin position="477"/>
        <end position="494"/>
    </location>
</feature>
<feature type="compositionally biased region" description="Gly residues" evidence="5">
    <location>
        <begin position="539"/>
        <end position="548"/>
    </location>
</feature>
<feature type="compositionally biased region" description="Gly residues" evidence="5">
    <location>
        <begin position="581"/>
        <end position="590"/>
    </location>
</feature>
<feature type="compositionally biased region" description="Low complexity" evidence="5">
    <location>
        <begin position="639"/>
        <end position="655"/>
    </location>
</feature>
<feature type="compositionally biased region" description="Pro residues" evidence="5">
    <location>
        <begin position="697"/>
        <end position="708"/>
    </location>
</feature>
<feature type="compositionally biased region" description="Low complexity" evidence="5">
    <location>
        <begin position="715"/>
        <end position="726"/>
    </location>
</feature>
<feature type="compositionally biased region" description="Basic and acidic residues" evidence="5">
    <location>
        <begin position="805"/>
        <end position="814"/>
    </location>
</feature>
<feature type="compositionally biased region" description="Low complexity" evidence="5">
    <location>
        <begin position="873"/>
        <end position="901"/>
    </location>
</feature>
<feature type="compositionally biased region" description="Low complexity" evidence="5">
    <location>
        <begin position="916"/>
        <end position="925"/>
    </location>
</feature>
<feature type="compositionally biased region" description="Low complexity" evidence="5">
    <location>
        <begin position="969"/>
        <end position="979"/>
    </location>
</feature>
<feature type="compositionally biased region" description="Gly residues" evidence="5">
    <location>
        <begin position="1040"/>
        <end position="1049"/>
    </location>
</feature>
<feature type="compositionally biased region" description="Pro residues" evidence="5">
    <location>
        <begin position="1074"/>
        <end position="1083"/>
    </location>
</feature>
<feature type="compositionally biased region" description="Low complexity" evidence="5">
    <location>
        <begin position="1084"/>
        <end position="1108"/>
    </location>
</feature>
<feature type="compositionally biased region" description="Gly residues" evidence="5">
    <location>
        <begin position="1160"/>
        <end position="1169"/>
    </location>
</feature>
<feature type="compositionally biased region" description="Pro residues" evidence="5">
    <location>
        <begin position="1216"/>
        <end position="1227"/>
    </location>
</feature>
<feature type="compositionally biased region" description="Low complexity" evidence="5">
    <location>
        <begin position="1240"/>
        <end position="1249"/>
    </location>
</feature>
<feature type="compositionally biased region" description="Low complexity" evidence="5">
    <location>
        <begin position="1282"/>
        <end position="1296"/>
    </location>
</feature>
<feature type="compositionally biased region" description="Pro residues" evidence="5">
    <location>
        <begin position="1341"/>
        <end position="1360"/>
    </location>
</feature>
<feature type="compositionally biased region" description="Low complexity" evidence="5">
    <location>
        <begin position="1383"/>
        <end position="1392"/>
    </location>
</feature>
<feature type="compositionally biased region" description="Low complexity" evidence="5">
    <location>
        <begin position="1417"/>
        <end position="1426"/>
    </location>
</feature>
<feature type="compositionally biased region" description="Pro residues" evidence="5">
    <location>
        <begin position="1428"/>
        <end position="1437"/>
    </location>
</feature>
<feature type="compositionally biased region" description="Low complexity" evidence="5">
    <location>
        <begin position="1453"/>
        <end position="1462"/>
    </location>
</feature>
<feature type="compositionally biased region" description="Gly residues" evidence="5">
    <location>
        <begin position="1481"/>
        <end position="1490"/>
    </location>
</feature>
<feature type="compositionally biased region" description="Pro residues" evidence="5">
    <location>
        <begin position="1491"/>
        <end position="1507"/>
    </location>
</feature>
<feature type="compositionally biased region" description="Low complexity" evidence="5">
    <location>
        <begin position="1509"/>
        <end position="1519"/>
    </location>
</feature>
<feature type="compositionally biased region" description="Pro residues" evidence="5">
    <location>
        <begin position="1528"/>
        <end position="1537"/>
    </location>
</feature>
<feature type="binding site" evidence="1">
    <location>
        <position position="1623"/>
    </location>
    <ligand>
        <name>Ca(2+)</name>
        <dbReference type="ChEBI" id="CHEBI:29108"/>
    </ligand>
</feature>
<feature type="binding site" evidence="1">
    <location>
        <position position="1625"/>
    </location>
    <ligand>
        <name>Ca(2+)</name>
        <dbReference type="ChEBI" id="CHEBI:29108"/>
    </ligand>
</feature>
<feature type="binding site" evidence="1">
    <location>
        <position position="1626"/>
    </location>
    <ligand>
        <name>Ca(2+)</name>
        <dbReference type="ChEBI" id="CHEBI:29108"/>
    </ligand>
</feature>
<feature type="binding site" evidence="1">
    <location>
        <position position="1628"/>
    </location>
    <ligand>
        <name>Ca(2+)</name>
        <dbReference type="ChEBI" id="CHEBI:29108"/>
    </ligand>
</feature>
<feature type="binding site" evidence="1">
    <location>
        <position position="1631"/>
    </location>
    <ligand>
        <name>Ca(2+)</name>
        <dbReference type="ChEBI" id="CHEBI:29108"/>
    </ligand>
</feature>
<feature type="modified residue" description="Allysine" evidence="2">
    <location>
        <position position="610"/>
    </location>
</feature>
<feature type="modified residue" description="Allysine" evidence="2">
    <location>
        <position position="1450"/>
    </location>
</feature>
<feature type="glycosylation site" description="N-linked (GlcNAc...) asparagine" evidence="3">
    <location>
        <position position="1638"/>
    </location>
</feature>
<feature type="disulfide bond" evidence="4">
    <location>
        <begin position="60"/>
        <end position="242"/>
    </location>
</feature>
<feature type="disulfide bond" evidence="4">
    <location>
        <begin position="181"/>
        <end position="235"/>
    </location>
</feature>
<feature type="disulfide bond" evidence="4">
    <location>
        <begin position="1605"/>
        <end position="1637"/>
    </location>
</feature>
<feature type="disulfide bond" description="Interchain" evidence="4">
    <location>
        <position position="1628"/>
    </location>
</feature>
<feature type="disulfide bond" evidence="4">
    <location>
        <begin position="1646"/>
        <end position="1801"/>
    </location>
</feature>
<feature type="disulfide bond" evidence="4">
    <location>
        <begin position="1712"/>
        <end position="1755"/>
    </location>
</feature>
<feature type="splice variant" id="VSP_001147" description="In isoform Short." evidence="7">
    <location>
        <begin position="329"/>
        <end position="413"/>
    </location>
</feature>
<feature type="sequence conflict" description="In Ref. 1; BAA07367." evidence="7" ref="1">
    <original>T</original>
    <variation>A</variation>
    <location>
        <position position="212"/>
    </location>
</feature>
<feature type="sequence conflict" description="In Ref. 1; BAA07367." evidence="7" ref="1">
    <original>L</original>
    <variation>V</variation>
    <location>
        <position position="370"/>
    </location>
</feature>
<feature type="sequence conflict" description="In Ref. 1; BAA07367." evidence="7" ref="1">
    <original>A</original>
    <variation>T</variation>
    <location>
        <position position="547"/>
    </location>
</feature>
<feature type="sequence conflict" description="In Ref. 1; BAA07367." evidence="7" ref="1">
    <original>P</original>
    <variation>S</variation>
    <location>
        <position position="696"/>
    </location>
</feature>
<feature type="sequence conflict" description="In Ref. 1; BAA07367." evidence="7" ref="1">
    <original>T</original>
    <variation>A</variation>
    <location>
        <position position="1065"/>
    </location>
</feature>
<feature type="sequence conflict" description="In Ref. 1; BAA07367." evidence="7" ref="1">
    <original>T</original>
    <variation>S</variation>
    <location>
        <position position="1476"/>
    </location>
</feature>
<evidence type="ECO:0000250" key="1"/>
<evidence type="ECO:0000250" key="2">
    <source>
        <dbReference type="UniProtKB" id="P12107"/>
    </source>
</evidence>
<evidence type="ECO:0000255" key="3"/>
<evidence type="ECO:0000255" key="4">
    <source>
        <dbReference type="PROSITE-ProRule" id="PRU00793"/>
    </source>
</evidence>
<evidence type="ECO:0000256" key="5">
    <source>
        <dbReference type="SAM" id="MobiDB-lite"/>
    </source>
</evidence>
<evidence type="ECO:0000269" key="6">
    <source>
    </source>
</evidence>
<evidence type="ECO:0000305" key="7"/>
<proteinExistence type="evidence at protein level"/>
<keyword id="KW-0025">Alternative splicing</keyword>
<keyword id="KW-0106">Calcium</keyword>
<keyword id="KW-0176">Collagen</keyword>
<keyword id="KW-0225">Disease variant</keyword>
<keyword id="KW-1015">Disulfide bond</keyword>
<keyword id="KW-0272">Extracellular matrix</keyword>
<keyword id="KW-0325">Glycoprotein</keyword>
<keyword id="KW-0379">Hydroxylation</keyword>
<keyword id="KW-0479">Metal-binding</keyword>
<keyword id="KW-1185">Reference proteome</keyword>
<keyword id="KW-0677">Repeat</keyword>
<keyword id="KW-0964">Secreted</keyword>
<keyword id="KW-0732">Signal</keyword>
<name>COBA1_MOUSE</name>
<sequence>MEPWSRWKTKRWIWDLTISTLALTFLFQAREVRGAAPVDILKALDFHNSPVGISKTTGFCTNRKNSKDPDVAYRVTEEAQISAPTKQLFPGGIFPQDFSILFTIKPKKGTQAFLLSLYNEHGIQQLGVEVGRSPVFLFEDHTGKPTPENYPLFSTVNIADGKWHRVAISVEKKTVTMIVDCKKKITKPLDRSERSIVDTNGIMVFGTRILETDVFQGDIQQFLITGDPKAAYDYCDHYSPDCDLTSKAAQAQEPHIDEYAPEDIIEYDYEYGETDYKEAESVTEMPTFTEETVAQTEANIVDDFQDYNYGTMEPYQTETPRRVSGSNEPNPVEEGFTEEYLTGEDYDVQRNTSEDILYGNKGVDGRDSDLLVDGDLGEYDFYEYKEYEERTTTSPNEEFGPGVPAETDFTETSINGHGAYGEKGQKGEPAVVEPGMLVEGPPGPAGPAGLMGPPGLQGPSGLPGDPGDRGPPGRPGLPGADGLPGPPGTMLMLPFRYGGDGSKGPTISAQEAQAQAILQQARIALRGPPGPMGLTGRPGPVGGPGSAGAKGESGDPGPQGPRGVQGPPGPTGKPGKRGRPGADGGRGMPGESGSKGDRGFDGLPGLPGDKGHRGERGPQGPPGLPGDDGMRGEDGEIGPRGLPGEAGPRGLLGPRGTPGPPGQPGIGGIDGPQGPKGNMGPQGEPGPPGQQGNPGPQGLPGPQGPIGPPGEKGPQGKPGLAGLPGADGPPGHPGKEGQSGEKGALGPPGPQGPIGYPGPRGVKGADGVRGLKGSKGEKGEDGFPGFKGDMGLKGDRGEVGQVGPRGEDGPEGPKGRAGPTGDPGPSGQAGEKGKLGVPGLPGYPGRQGPKGSTGFPGFPGANGEKGARGIAGKPGPRGQRGPTGPRGSRGARGPTGKPGPKGTSGGDGPPGPPGERGPQGPQGPVGFPGPKGPPGPAGKDGLPGHPGQRGETGFQGKTGPPGPGGVVGPQGPTGETGPIGERGHPGPPGPPGEQGLPGAAGKEGAKGDPGPQGISGKDGPAGIRGFPGERGLPGAQGAPGLKGGEGPQGPQGPVGSPGERGSAGTAGPIGLPGRPGPQGPPGPAGEKGAPGEKGPQGPAGRDGVQGPVGLPGPAGPAGSPGEDGDKGEIGEPGQKGSKGDKGENGPPGPPGLQGPVGAPGIAGGDGEPGPRGQQGMFGQKGDEGARGFPGLPGPIGLQGLPGPPGEKGENGDVGPMGPPGPPGPRGPQGPNGADGPQGPPGSIGSVGVVGDKGEPGEAGNPGPPGEAGSGGLKGERGEKGEAGPPGAAGPAGIKGPPGDDGPKGNPGPVGFPGDPGPPGEPGPAGQDGVGGDKGEDGDPGQPGPPGPSGEAGPPGPPGKRGPPGASGSEGRQGEKGAKGEAGAEGPPGKTGPVGPQGPSGKPGPEGLRGIPGPVGEQGLPGAAGQDGPPGPLGPPGLPGLKGDPGSKGEKGHPGLIGLIGPPGEQGEKGDRGLPGTQGSPGAKGDGGIPGPAGPIGPPGPPGLPGPAGPKGNKGSSGPTGQKGDSGMPGPPGPPGPPGEVIQPLPILSPKKTRRHTESIQGDAGDNILDYSDGMEEIFGSLNSLKQDIEHMKFPMGTQTNPARTCKDLQLSHPDFPDGEYWIDPNQGCSGDSFKVYCNFTAGGETCIYPDKKSEGVRISSWPKEKPGSWYSEFKRGKLLSYLDVEGNSINMVQMTFLKLLTASARQNFTYNCHQSAAWYDVLSGSYDKALRFLGSNDEEMSYENNPHIKALYDGCASRKGYEKTVIEINTPKIDQVPIIDVMINDFGDQNQKFGFEVGPACFLG</sequence>
<organism>
    <name type="scientific">Mus musculus</name>
    <name type="common">Mouse</name>
    <dbReference type="NCBI Taxonomy" id="10090"/>
    <lineage>
        <taxon>Eukaryota</taxon>
        <taxon>Metazoa</taxon>
        <taxon>Chordata</taxon>
        <taxon>Craniata</taxon>
        <taxon>Vertebrata</taxon>
        <taxon>Euteleostomi</taxon>
        <taxon>Mammalia</taxon>
        <taxon>Eutheria</taxon>
        <taxon>Euarchontoglires</taxon>
        <taxon>Glires</taxon>
        <taxon>Rodentia</taxon>
        <taxon>Myomorpha</taxon>
        <taxon>Muroidea</taxon>
        <taxon>Muridae</taxon>
        <taxon>Murinae</taxon>
        <taxon>Mus</taxon>
        <taxon>Mus</taxon>
    </lineage>
</organism>
<protein>
    <recommendedName>
        <fullName>Collagen alpha-1(XI) chain</fullName>
    </recommendedName>
</protein>
<gene>
    <name type="primary">Col11a1</name>
</gene>
<accession>Q61245</accession>
<accession>Q64047</accession>
<accession>Q80WR4</accession>
<reference key="1">
    <citation type="journal article" date="1995" name="Genomics">
        <title>Coding sequence and alternative splicing of the mouse alpha 1(XI) collagen gene (Col11a1).</title>
        <authorList>
            <person name="Yoshioka H."/>
            <person name="Inoguchi K."/>
            <person name="Khaleduzzaman M."/>
            <person name="Ninomiya Y."/>
            <person name="Andrikopoulos K."/>
            <person name="Ramirez F."/>
        </authorList>
    </citation>
    <scope>NUCLEOTIDE SEQUENCE [MRNA] (ISOFORM LONG)</scope>
    <scope>ALTERNATIVE SPLICING</scope>
    <source>
        <tissue>Embryo</tissue>
    </source>
</reference>
<reference key="2">
    <citation type="journal article" date="2004" name="Genome Res.">
        <title>The status, quality, and expansion of the NIH full-length cDNA project: the Mammalian Gene Collection (MGC).</title>
        <authorList>
            <consortium name="The MGC Project Team"/>
        </authorList>
    </citation>
    <scope>NUCLEOTIDE SEQUENCE [LARGE SCALE MRNA] (ISOFORM LONG)</scope>
    <source>
        <tissue>Embryo</tissue>
    </source>
</reference>
<reference key="3">
    <citation type="journal article" date="1995" name="Cell">
        <title>A fibrillar collagen gene, Col11a1, is essential for skeletal morphogenesis.</title>
        <authorList>
            <person name="Li Y."/>
            <person name="Lacerda D.A."/>
            <person name="Warman M.L."/>
            <person name="Beier D.R."/>
            <person name="Yoshioka H."/>
            <person name="Ninomiya Y."/>
            <person name="Oxford J.T."/>
            <person name="Morris N.P."/>
            <person name="Andrikopoulos K."/>
            <person name="Ramirez F."/>
            <person name="Wardell B.B."/>
            <person name="Lifferth G.D."/>
            <person name="Teuscher C."/>
            <person name="Woodward S.R."/>
            <person name="Taylor B.A."/>
            <person name="Seegmiller R.E."/>
            <person name="Olsen B.R."/>
        </authorList>
    </citation>
    <scope>NUCLEOTIDE SEQUENCE [MRNA] OF 181-198</scope>
    <scope>DISEASE</scope>
    <source>
        <strain>C57BL/6J</strain>
    </source>
</reference>
<reference key="4">
    <citation type="journal article" date="2010" name="Cell">
        <title>A tissue-specific atlas of mouse protein phosphorylation and expression.</title>
        <authorList>
            <person name="Huttlin E.L."/>
            <person name="Jedrychowski M.P."/>
            <person name="Elias J.E."/>
            <person name="Goswami T."/>
            <person name="Rad R."/>
            <person name="Beausoleil S.A."/>
            <person name="Villen J."/>
            <person name="Haas W."/>
            <person name="Sowa M.E."/>
            <person name="Gygi S.P."/>
        </authorList>
    </citation>
    <scope>IDENTIFICATION BY MASS SPECTROMETRY [LARGE SCALE ANALYSIS]</scope>
    <source>
        <tissue>Kidney</tissue>
    </source>
</reference>